<evidence type="ECO:0000255" key="1">
    <source>
        <dbReference type="HAMAP-Rule" id="MF_01395"/>
    </source>
</evidence>
<evidence type="ECO:0000255" key="2">
    <source>
        <dbReference type="PROSITE-ProRule" id="PRU01136"/>
    </source>
</evidence>
<dbReference type="EC" id="2.1.3.15" evidence="1"/>
<dbReference type="EMBL" id="AE017221">
    <property type="protein sequence ID" value="AAS81751.1"/>
    <property type="molecule type" value="Genomic_DNA"/>
</dbReference>
<dbReference type="RefSeq" id="WP_011173791.1">
    <property type="nucleotide sequence ID" value="NC_005835.1"/>
</dbReference>
<dbReference type="SMR" id="Q72HS7"/>
<dbReference type="KEGG" id="tth:TT_C1409"/>
<dbReference type="eggNOG" id="COG0777">
    <property type="taxonomic scope" value="Bacteria"/>
</dbReference>
<dbReference type="HOGENOM" id="CLU_015486_1_1_0"/>
<dbReference type="OrthoDB" id="9772975at2"/>
<dbReference type="UniPathway" id="UPA00655">
    <property type="reaction ID" value="UER00711"/>
</dbReference>
<dbReference type="Proteomes" id="UP000000592">
    <property type="component" value="Chromosome"/>
</dbReference>
<dbReference type="GO" id="GO:0009317">
    <property type="term" value="C:acetyl-CoA carboxylase complex"/>
    <property type="evidence" value="ECO:0007669"/>
    <property type="project" value="InterPro"/>
</dbReference>
<dbReference type="GO" id="GO:0003989">
    <property type="term" value="F:acetyl-CoA carboxylase activity"/>
    <property type="evidence" value="ECO:0007669"/>
    <property type="project" value="InterPro"/>
</dbReference>
<dbReference type="GO" id="GO:0005524">
    <property type="term" value="F:ATP binding"/>
    <property type="evidence" value="ECO:0007669"/>
    <property type="project" value="UniProtKB-KW"/>
</dbReference>
<dbReference type="GO" id="GO:0016743">
    <property type="term" value="F:carboxyl- or carbamoyltransferase activity"/>
    <property type="evidence" value="ECO:0007669"/>
    <property type="project" value="UniProtKB-UniRule"/>
</dbReference>
<dbReference type="GO" id="GO:0008270">
    <property type="term" value="F:zinc ion binding"/>
    <property type="evidence" value="ECO:0007669"/>
    <property type="project" value="UniProtKB-UniRule"/>
</dbReference>
<dbReference type="GO" id="GO:0006633">
    <property type="term" value="P:fatty acid biosynthetic process"/>
    <property type="evidence" value="ECO:0007669"/>
    <property type="project" value="UniProtKB-KW"/>
</dbReference>
<dbReference type="GO" id="GO:2001295">
    <property type="term" value="P:malonyl-CoA biosynthetic process"/>
    <property type="evidence" value="ECO:0007669"/>
    <property type="project" value="UniProtKB-UniRule"/>
</dbReference>
<dbReference type="Gene3D" id="3.90.226.10">
    <property type="entry name" value="2-enoyl-CoA Hydratase, Chain A, domain 1"/>
    <property type="match status" value="1"/>
</dbReference>
<dbReference type="HAMAP" id="MF_01395">
    <property type="entry name" value="AcetylCoA_CT_beta"/>
    <property type="match status" value="1"/>
</dbReference>
<dbReference type="InterPro" id="IPR034733">
    <property type="entry name" value="AcCoA_carboxyl_beta"/>
</dbReference>
<dbReference type="InterPro" id="IPR000438">
    <property type="entry name" value="Acetyl_CoA_COase_Trfase_b_su"/>
</dbReference>
<dbReference type="InterPro" id="IPR029045">
    <property type="entry name" value="ClpP/crotonase-like_dom_sf"/>
</dbReference>
<dbReference type="InterPro" id="IPR011762">
    <property type="entry name" value="COA_CT_N"/>
</dbReference>
<dbReference type="InterPro" id="IPR041010">
    <property type="entry name" value="Znf-ACC"/>
</dbReference>
<dbReference type="NCBIfam" id="TIGR00515">
    <property type="entry name" value="accD"/>
    <property type="match status" value="1"/>
</dbReference>
<dbReference type="PANTHER" id="PTHR42995">
    <property type="entry name" value="ACETYL-COENZYME A CARBOXYLASE CARBOXYL TRANSFERASE SUBUNIT BETA, CHLOROPLASTIC"/>
    <property type="match status" value="1"/>
</dbReference>
<dbReference type="PANTHER" id="PTHR42995:SF5">
    <property type="entry name" value="ACETYL-COENZYME A CARBOXYLASE CARBOXYL TRANSFERASE SUBUNIT BETA, CHLOROPLASTIC"/>
    <property type="match status" value="1"/>
</dbReference>
<dbReference type="Pfam" id="PF01039">
    <property type="entry name" value="Carboxyl_trans"/>
    <property type="match status" value="1"/>
</dbReference>
<dbReference type="Pfam" id="PF17848">
    <property type="entry name" value="Zn_ribbon_ACC"/>
    <property type="match status" value="1"/>
</dbReference>
<dbReference type="PRINTS" id="PR01070">
    <property type="entry name" value="ACCCTRFRASEB"/>
</dbReference>
<dbReference type="SUPFAM" id="SSF52096">
    <property type="entry name" value="ClpP/crotonase"/>
    <property type="match status" value="1"/>
</dbReference>
<dbReference type="PROSITE" id="PS50980">
    <property type="entry name" value="COA_CT_NTER"/>
    <property type="match status" value="1"/>
</dbReference>
<feature type="chain" id="PRO_0000389894" description="Acetyl-coenzyme A carboxylase carboxyl transferase subunit beta">
    <location>
        <begin position="1"/>
        <end position="285"/>
    </location>
</feature>
<feature type="domain" description="CoA carboxyltransferase N-terminal" evidence="2">
    <location>
        <begin position="22"/>
        <end position="285"/>
    </location>
</feature>
<feature type="zinc finger region" description="C4-type" evidence="1">
    <location>
        <begin position="26"/>
        <end position="48"/>
    </location>
</feature>
<feature type="binding site" evidence="1">
    <location>
        <position position="26"/>
    </location>
    <ligand>
        <name>Zn(2+)</name>
        <dbReference type="ChEBI" id="CHEBI:29105"/>
    </ligand>
</feature>
<feature type="binding site" evidence="1">
    <location>
        <position position="29"/>
    </location>
    <ligand>
        <name>Zn(2+)</name>
        <dbReference type="ChEBI" id="CHEBI:29105"/>
    </ligand>
</feature>
<feature type="binding site" evidence="1">
    <location>
        <position position="45"/>
    </location>
    <ligand>
        <name>Zn(2+)</name>
        <dbReference type="ChEBI" id="CHEBI:29105"/>
    </ligand>
</feature>
<feature type="binding site" evidence="1">
    <location>
        <position position="48"/>
    </location>
    <ligand>
        <name>Zn(2+)</name>
        <dbReference type="ChEBI" id="CHEBI:29105"/>
    </ligand>
</feature>
<name>ACCD_THET2</name>
<organism>
    <name type="scientific">Thermus thermophilus (strain ATCC BAA-163 / DSM 7039 / HB27)</name>
    <dbReference type="NCBI Taxonomy" id="262724"/>
    <lineage>
        <taxon>Bacteria</taxon>
        <taxon>Thermotogati</taxon>
        <taxon>Deinococcota</taxon>
        <taxon>Deinococci</taxon>
        <taxon>Thermales</taxon>
        <taxon>Thermaceae</taxon>
        <taxon>Thermus</taxon>
    </lineage>
</organism>
<gene>
    <name evidence="1" type="primary">accD</name>
    <name type="ordered locus">TT_C1409</name>
</gene>
<accession>Q72HS7</accession>
<keyword id="KW-0067">ATP-binding</keyword>
<keyword id="KW-0963">Cytoplasm</keyword>
<keyword id="KW-0275">Fatty acid biosynthesis</keyword>
<keyword id="KW-0276">Fatty acid metabolism</keyword>
<keyword id="KW-0444">Lipid biosynthesis</keyword>
<keyword id="KW-0443">Lipid metabolism</keyword>
<keyword id="KW-0479">Metal-binding</keyword>
<keyword id="KW-0547">Nucleotide-binding</keyword>
<keyword id="KW-0808">Transferase</keyword>
<keyword id="KW-0862">Zinc</keyword>
<keyword id="KW-0863">Zinc-finger</keyword>
<reference key="1">
    <citation type="journal article" date="2004" name="Nat. Biotechnol.">
        <title>The genome sequence of the extreme thermophile Thermus thermophilus.</title>
        <authorList>
            <person name="Henne A."/>
            <person name="Brueggemann H."/>
            <person name="Raasch C."/>
            <person name="Wiezer A."/>
            <person name="Hartsch T."/>
            <person name="Liesegang H."/>
            <person name="Johann A."/>
            <person name="Lienard T."/>
            <person name="Gohl O."/>
            <person name="Martinez-Arias R."/>
            <person name="Jacobi C."/>
            <person name="Starkuviene V."/>
            <person name="Schlenczeck S."/>
            <person name="Dencker S."/>
            <person name="Huber R."/>
            <person name="Klenk H.-P."/>
            <person name="Kramer W."/>
            <person name="Merkl R."/>
            <person name="Gottschalk G."/>
            <person name="Fritz H.-J."/>
        </authorList>
    </citation>
    <scope>NUCLEOTIDE SEQUENCE [LARGE SCALE GENOMIC DNA]</scope>
    <source>
        <strain>ATCC BAA-163 / DSM 7039 / HB27</strain>
    </source>
</reference>
<sequence>MALERLFRRKRPSGGNRDVPELWTKCEACGAQIYKKEFQENLHVCPKCGHHHRLPAQERVAMLADPGTFQETTRLRPLDPLGFVDTKPYVERLKAYQAETGRPDAILGGTCQIGGVPAVLLVMDYAFAGGSMGSVVGEEIARGAERAAEEGRALVIVAASGGARMQEAALSLMQMAKTVMSLDRVWARRLPYVSVLTDPTTGGVTASFAALADVILAEPGALIGFAGPRVIRQTIRQELPEGFQRSEFLLKHGMVDRVTDRRRLKEELVRVLRHLHPGVAYAPGV</sequence>
<comment type="function">
    <text evidence="1">Component of the acetyl coenzyme A carboxylase (ACC) complex. Biotin carboxylase (BC) catalyzes the carboxylation of biotin on its carrier protein (BCCP) and then the CO(2) group is transferred by the transcarboxylase to acetyl-CoA to form malonyl-CoA.</text>
</comment>
<comment type="catalytic activity">
    <reaction evidence="1">
        <text>N(6)-carboxybiotinyl-L-lysyl-[protein] + acetyl-CoA = N(6)-biotinyl-L-lysyl-[protein] + malonyl-CoA</text>
        <dbReference type="Rhea" id="RHEA:54728"/>
        <dbReference type="Rhea" id="RHEA-COMP:10505"/>
        <dbReference type="Rhea" id="RHEA-COMP:10506"/>
        <dbReference type="ChEBI" id="CHEBI:57288"/>
        <dbReference type="ChEBI" id="CHEBI:57384"/>
        <dbReference type="ChEBI" id="CHEBI:83144"/>
        <dbReference type="ChEBI" id="CHEBI:83145"/>
        <dbReference type="EC" id="2.1.3.15"/>
    </reaction>
</comment>
<comment type="cofactor">
    <cofactor evidence="1">
        <name>Zn(2+)</name>
        <dbReference type="ChEBI" id="CHEBI:29105"/>
    </cofactor>
    <text evidence="1">Binds 1 zinc ion per subunit.</text>
</comment>
<comment type="pathway">
    <text evidence="1">Lipid metabolism; malonyl-CoA biosynthesis; malonyl-CoA from acetyl-CoA: step 1/1.</text>
</comment>
<comment type="subunit">
    <text evidence="1">Acetyl-CoA carboxylase is a heterohexamer composed of biotin carboxyl carrier protein (AccB), biotin carboxylase (AccC) and two subunits each of ACCase subunit alpha (AccA) and ACCase subunit beta (AccD).</text>
</comment>
<comment type="subcellular location">
    <subcellularLocation>
        <location evidence="1">Cytoplasm</location>
    </subcellularLocation>
</comment>
<comment type="similarity">
    <text evidence="1">Belongs to the AccD/PCCB family.</text>
</comment>
<protein>
    <recommendedName>
        <fullName evidence="1">Acetyl-coenzyme A carboxylase carboxyl transferase subunit beta</fullName>
        <shortName evidence="1">ACCase subunit beta</shortName>
        <shortName evidence="1">Acetyl-CoA carboxylase carboxyltransferase subunit beta</shortName>
        <ecNumber evidence="1">2.1.3.15</ecNumber>
    </recommendedName>
</protein>
<proteinExistence type="inferred from homology"/>